<name>PRMA_SHEB8</name>
<accession>A6WTE5</accession>
<feature type="chain" id="PRO_1000046085" description="Ribosomal protein L11 methyltransferase">
    <location>
        <begin position="1"/>
        <end position="293"/>
    </location>
</feature>
<feature type="binding site" evidence="1">
    <location>
        <position position="145"/>
    </location>
    <ligand>
        <name>S-adenosyl-L-methionine</name>
        <dbReference type="ChEBI" id="CHEBI:59789"/>
    </ligand>
</feature>
<feature type="binding site" evidence="1">
    <location>
        <position position="166"/>
    </location>
    <ligand>
        <name>S-adenosyl-L-methionine</name>
        <dbReference type="ChEBI" id="CHEBI:59789"/>
    </ligand>
</feature>
<feature type="binding site" evidence="1">
    <location>
        <position position="188"/>
    </location>
    <ligand>
        <name>S-adenosyl-L-methionine</name>
        <dbReference type="ChEBI" id="CHEBI:59789"/>
    </ligand>
</feature>
<feature type="binding site" evidence="1">
    <location>
        <position position="230"/>
    </location>
    <ligand>
        <name>S-adenosyl-L-methionine</name>
        <dbReference type="ChEBI" id="CHEBI:59789"/>
    </ligand>
</feature>
<comment type="function">
    <text evidence="1">Methylates ribosomal protein L11.</text>
</comment>
<comment type="catalytic activity">
    <reaction evidence="1">
        <text>L-lysyl-[protein] + 3 S-adenosyl-L-methionine = N(6),N(6),N(6)-trimethyl-L-lysyl-[protein] + 3 S-adenosyl-L-homocysteine + 3 H(+)</text>
        <dbReference type="Rhea" id="RHEA:54192"/>
        <dbReference type="Rhea" id="RHEA-COMP:9752"/>
        <dbReference type="Rhea" id="RHEA-COMP:13826"/>
        <dbReference type="ChEBI" id="CHEBI:15378"/>
        <dbReference type="ChEBI" id="CHEBI:29969"/>
        <dbReference type="ChEBI" id="CHEBI:57856"/>
        <dbReference type="ChEBI" id="CHEBI:59789"/>
        <dbReference type="ChEBI" id="CHEBI:61961"/>
    </reaction>
</comment>
<comment type="subcellular location">
    <subcellularLocation>
        <location evidence="1">Cytoplasm</location>
    </subcellularLocation>
</comment>
<comment type="similarity">
    <text evidence="1">Belongs to the methyltransferase superfamily. PrmA family.</text>
</comment>
<sequence>MPWIQLRINTNSDDAETISDLLMEEGSVSITFEDGKDTPIFEPKLGETPLWRDTVVVALFDAETDLTPTIAMLKTLPFLGENFSHKVEQIEDKDWVREWMDNFHPIQFGTRLWICPSWREIPDPTAVNVILDPGLAFGTGTHPTTALCLEWLDSLDLSNKEVIDFGCGSGILAVAALKLGAKNVTGIDIDYQAIDASRANAERNDVADKLALYLPEDQPADLKADVLVANILAGPLRELAPLIAERVKTGGKLALSGLLKEQAQEISDFYSQWFDMDVAAHKEDWSRLTGKRK</sequence>
<dbReference type="EC" id="2.1.1.-" evidence="1"/>
<dbReference type="EMBL" id="CP000753">
    <property type="protein sequence ID" value="ABS10084.1"/>
    <property type="molecule type" value="Genomic_DNA"/>
</dbReference>
<dbReference type="RefSeq" id="WP_012090401.1">
    <property type="nucleotide sequence ID" value="NC_009665.1"/>
</dbReference>
<dbReference type="SMR" id="A6WTE5"/>
<dbReference type="KEGG" id="sbm:Shew185_3963"/>
<dbReference type="HOGENOM" id="CLU_049382_4_1_6"/>
<dbReference type="GO" id="GO:0005829">
    <property type="term" value="C:cytosol"/>
    <property type="evidence" value="ECO:0007669"/>
    <property type="project" value="TreeGrafter"/>
</dbReference>
<dbReference type="GO" id="GO:0016279">
    <property type="term" value="F:protein-lysine N-methyltransferase activity"/>
    <property type="evidence" value="ECO:0007669"/>
    <property type="project" value="TreeGrafter"/>
</dbReference>
<dbReference type="GO" id="GO:0032259">
    <property type="term" value="P:methylation"/>
    <property type="evidence" value="ECO:0007669"/>
    <property type="project" value="UniProtKB-KW"/>
</dbReference>
<dbReference type="CDD" id="cd02440">
    <property type="entry name" value="AdoMet_MTases"/>
    <property type="match status" value="1"/>
</dbReference>
<dbReference type="Gene3D" id="3.40.50.150">
    <property type="entry name" value="Vaccinia Virus protein VP39"/>
    <property type="match status" value="1"/>
</dbReference>
<dbReference type="HAMAP" id="MF_00735">
    <property type="entry name" value="Methyltr_PrmA"/>
    <property type="match status" value="1"/>
</dbReference>
<dbReference type="InterPro" id="IPR050078">
    <property type="entry name" value="Ribosomal_L11_MeTrfase_PrmA"/>
</dbReference>
<dbReference type="InterPro" id="IPR004498">
    <property type="entry name" value="Ribosomal_PrmA_MeTrfase"/>
</dbReference>
<dbReference type="InterPro" id="IPR029063">
    <property type="entry name" value="SAM-dependent_MTases_sf"/>
</dbReference>
<dbReference type="NCBIfam" id="TIGR00406">
    <property type="entry name" value="prmA"/>
    <property type="match status" value="1"/>
</dbReference>
<dbReference type="PANTHER" id="PTHR43648">
    <property type="entry name" value="ELECTRON TRANSFER FLAVOPROTEIN BETA SUBUNIT LYSINE METHYLTRANSFERASE"/>
    <property type="match status" value="1"/>
</dbReference>
<dbReference type="PANTHER" id="PTHR43648:SF1">
    <property type="entry name" value="ELECTRON TRANSFER FLAVOPROTEIN BETA SUBUNIT LYSINE METHYLTRANSFERASE"/>
    <property type="match status" value="1"/>
</dbReference>
<dbReference type="Pfam" id="PF06325">
    <property type="entry name" value="PrmA"/>
    <property type="match status" value="1"/>
</dbReference>
<dbReference type="PIRSF" id="PIRSF000401">
    <property type="entry name" value="RPL11_MTase"/>
    <property type="match status" value="1"/>
</dbReference>
<dbReference type="SUPFAM" id="SSF53335">
    <property type="entry name" value="S-adenosyl-L-methionine-dependent methyltransferases"/>
    <property type="match status" value="1"/>
</dbReference>
<keyword id="KW-0963">Cytoplasm</keyword>
<keyword id="KW-0489">Methyltransferase</keyword>
<keyword id="KW-0949">S-adenosyl-L-methionine</keyword>
<keyword id="KW-0808">Transferase</keyword>
<reference key="1">
    <citation type="submission" date="2007-07" db="EMBL/GenBank/DDBJ databases">
        <title>Complete sequence of chromosome of Shewanella baltica OS185.</title>
        <authorList>
            <consortium name="US DOE Joint Genome Institute"/>
            <person name="Copeland A."/>
            <person name="Lucas S."/>
            <person name="Lapidus A."/>
            <person name="Barry K."/>
            <person name="Glavina del Rio T."/>
            <person name="Dalin E."/>
            <person name="Tice H."/>
            <person name="Pitluck S."/>
            <person name="Sims D."/>
            <person name="Brettin T."/>
            <person name="Bruce D."/>
            <person name="Detter J.C."/>
            <person name="Han C."/>
            <person name="Schmutz J."/>
            <person name="Larimer F."/>
            <person name="Land M."/>
            <person name="Hauser L."/>
            <person name="Kyrpides N."/>
            <person name="Mikhailova N."/>
            <person name="Brettar I."/>
            <person name="Rodrigues J."/>
            <person name="Konstantinidis K."/>
            <person name="Tiedje J."/>
            <person name="Richardson P."/>
        </authorList>
    </citation>
    <scope>NUCLEOTIDE SEQUENCE [LARGE SCALE GENOMIC DNA]</scope>
    <source>
        <strain>OS185</strain>
    </source>
</reference>
<evidence type="ECO:0000255" key="1">
    <source>
        <dbReference type="HAMAP-Rule" id="MF_00735"/>
    </source>
</evidence>
<proteinExistence type="inferred from homology"/>
<organism>
    <name type="scientific">Shewanella baltica (strain OS185)</name>
    <dbReference type="NCBI Taxonomy" id="402882"/>
    <lineage>
        <taxon>Bacteria</taxon>
        <taxon>Pseudomonadati</taxon>
        <taxon>Pseudomonadota</taxon>
        <taxon>Gammaproteobacteria</taxon>
        <taxon>Alteromonadales</taxon>
        <taxon>Shewanellaceae</taxon>
        <taxon>Shewanella</taxon>
    </lineage>
</organism>
<protein>
    <recommendedName>
        <fullName evidence="1">Ribosomal protein L11 methyltransferase</fullName>
        <shortName evidence="1">L11 Mtase</shortName>
        <ecNumber evidence="1">2.1.1.-</ecNumber>
    </recommendedName>
</protein>
<gene>
    <name evidence="1" type="primary">prmA</name>
    <name type="ordered locus">Shew185_3963</name>
</gene>